<reference key="1">
    <citation type="journal article" date="2002" name="DNA Res.">
        <title>Complete genomic sequence of nitrogen-fixing symbiotic bacterium Bradyrhizobium japonicum USDA110.</title>
        <authorList>
            <person name="Kaneko T."/>
            <person name="Nakamura Y."/>
            <person name="Sato S."/>
            <person name="Minamisawa K."/>
            <person name="Uchiumi T."/>
            <person name="Sasamoto S."/>
            <person name="Watanabe A."/>
            <person name="Idesawa K."/>
            <person name="Iriguchi M."/>
            <person name="Kawashima K."/>
            <person name="Kohara M."/>
            <person name="Matsumoto M."/>
            <person name="Shimpo S."/>
            <person name="Tsuruoka H."/>
            <person name="Wada T."/>
            <person name="Yamada M."/>
            <person name="Tabata S."/>
        </authorList>
    </citation>
    <scope>NUCLEOTIDE SEQUENCE [LARGE SCALE GENOMIC DNA]</scope>
    <source>
        <strain>JCM 10833 / BCRC 13528 / IAM 13628 / NBRC 14792 / USDA 110</strain>
    </source>
</reference>
<evidence type="ECO:0000255" key="1">
    <source>
        <dbReference type="HAMAP-Rule" id="MF_00037"/>
    </source>
</evidence>
<dbReference type="EC" id="1.3.1.98" evidence="1"/>
<dbReference type="EMBL" id="BA000040">
    <property type="protein sequence ID" value="BAC51865.1"/>
    <property type="molecule type" value="Genomic_DNA"/>
</dbReference>
<dbReference type="RefSeq" id="NP_773240.1">
    <property type="nucleotide sequence ID" value="NC_004463.1"/>
</dbReference>
<dbReference type="RefSeq" id="WP_011089340.1">
    <property type="nucleotide sequence ID" value="NC_004463.1"/>
</dbReference>
<dbReference type="SMR" id="Q89FU9"/>
<dbReference type="STRING" id="224911.AAV28_30580"/>
<dbReference type="EnsemblBacteria" id="BAC51865">
    <property type="protein sequence ID" value="BAC51865"/>
    <property type="gene ID" value="BAC51865"/>
</dbReference>
<dbReference type="GeneID" id="46493572"/>
<dbReference type="KEGG" id="bja:bll6600"/>
<dbReference type="PATRIC" id="fig|224911.44.peg.6612"/>
<dbReference type="eggNOG" id="COG0812">
    <property type="taxonomic scope" value="Bacteria"/>
</dbReference>
<dbReference type="HOGENOM" id="CLU_035304_1_0_5"/>
<dbReference type="InParanoid" id="Q89FU9"/>
<dbReference type="OrthoDB" id="9804753at2"/>
<dbReference type="PhylomeDB" id="Q89FU9"/>
<dbReference type="UniPathway" id="UPA00219"/>
<dbReference type="Proteomes" id="UP000002526">
    <property type="component" value="Chromosome"/>
</dbReference>
<dbReference type="GO" id="GO:0005829">
    <property type="term" value="C:cytosol"/>
    <property type="evidence" value="ECO:0000318"/>
    <property type="project" value="GO_Central"/>
</dbReference>
<dbReference type="GO" id="GO:0071949">
    <property type="term" value="F:FAD binding"/>
    <property type="evidence" value="ECO:0007669"/>
    <property type="project" value="InterPro"/>
</dbReference>
<dbReference type="GO" id="GO:0050660">
    <property type="term" value="F:flavin adenine dinucleotide binding"/>
    <property type="evidence" value="ECO:0000318"/>
    <property type="project" value="GO_Central"/>
</dbReference>
<dbReference type="GO" id="GO:0008762">
    <property type="term" value="F:UDP-N-acetylmuramate dehydrogenase activity"/>
    <property type="evidence" value="ECO:0000318"/>
    <property type="project" value="GO_Central"/>
</dbReference>
<dbReference type="GO" id="GO:0051301">
    <property type="term" value="P:cell division"/>
    <property type="evidence" value="ECO:0007669"/>
    <property type="project" value="UniProtKB-KW"/>
</dbReference>
<dbReference type="GO" id="GO:0071555">
    <property type="term" value="P:cell wall organization"/>
    <property type="evidence" value="ECO:0000318"/>
    <property type="project" value="GO_Central"/>
</dbReference>
<dbReference type="GO" id="GO:0009252">
    <property type="term" value="P:peptidoglycan biosynthetic process"/>
    <property type="evidence" value="ECO:0007669"/>
    <property type="project" value="UniProtKB-UniRule"/>
</dbReference>
<dbReference type="GO" id="GO:0008360">
    <property type="term" value="P:regulation of cell shape"/>
    <property type="evidence" value="ECO:0007669"/>
    <property type="project" value="UniProtKB-KW"/>
</dbReference>
<dbReference type="Gene3D" id="3.30.465.10">
    <property type="match status" value="1"/>
</dbReference>
<dbReference type="Gene3D" id="3.90.78.10">
    <property type="entry name" value="UDP-N-acetylenolpyruvoylglucosamine reductase, C-terminal domain"/>
    <property type="match status" value="1"/>
</dbReference>
<dbReference type="Gene3D" id="3.30.43.10">
    <property type="entry name" value="Uridine Diphospho-n-acetylenolpyruvylglucosamine Reductase, domain 2"/>
    <property type="match status" value="1"/>
</dbReference>
<dbReference type="HAMAP" id="MF_00037">
    <property type="entry name" value="MurB"/>
    <property type="match status" value="1"/>
</dbReference>
<dbReference type="InterPro" id="IPR016166">
    <property type="entry name" value="FAD-bd_PCMH"/>
</dbReference>
<dbReference type="InterPro" id="IPR036318">
    <property type="entry name" value="FAD-bd_PCMH-like_sf"/>
</dbReference>
<dbReference type="InterPro" id="IPR016167">
    <property type="entry name" value="FAD-bd_PCMH_sub1"/>
</dbReference>
<dbReference type="InterPro" id="IPR016169">
    <property type="entry name" value="FAD-bd_PCMH_sub2"/>
</dbReference>
<dbReference type="InterPro" id="IPR003170">
    <property type="entry name" value="MurB"/>
</dbReference>
<dbReference type="InterPro" id="IPR011601">
    <property type="entry name" value="MurB_C"/>
</dbReference>
<dbReference type="InterPro" id="IPR036635">
    <property type="entry name" value="MurB_C_sf"/>
</dbReference>
<dbReference type="InterPro" id="IPR006094">
    <property type="entry name" value="Oxid_FAD_bind_N"/>
</dbReference>
<dbReference type="NCBIfam" id="TIGR00179">
    <property type="entry name" value="murB"/>
    <property type="match status" value="1"/>
</dbReference>
<dbReference type="NCBIfam" id="NF010480">
    <property type="entry name" value="PRK13905.1"/>
    <property type="match status" value="1"/>
</dbReference>
<dbReference type="PANTHER" id="PTHR21071">
    <property type="entry name" value="UDP-N-ACETYLENOLPYRUVOYLGLUCOSAMINE REDUCTASE"/>
    <property type="match status" value="1"/>
</dbReference>
<dbReference type="PANTHER" id="PTHR21071:SF4">
    <property type="entry name" value="UDP-N-ACETYLENOLPYRUVOYLGLUCOSAMINE REDUCTASE"/>
    <property type="match status" value="1"/>
</dbReference>
<dbReference type="Pfam" id="PF01565">
    <property type="entry name" value="FAD_binding_4"/>
    <property type="match status" value="1"/>
</dbReference>
<dbReference type="Pfam" id="PF02873">
    <property type="entry name" value="MurB_C"/>
    <property type="match status" value="1"/>
</dbReference>
<dbReference type="SUPFAM" id="SSF56176">
    <property type="entry name" value="FAD-binding/transporter-associated domain-like"/>
    <property type="match status" value="1"/>
</dbReference>
<dbReference type="SUPFAM" id="SSF56194">
    <property type="entry name" value="Uridine diphospho-N-Acetylenolpyruvylglucosamine reductase, MurB, C-terminal domain"/>
    <property type="match status" value="1"/>
</dbReference>
<dbReference type="PROSITE" id="PS51387">
    <property type="entry name" value="FAD_PCMH"/>
    <property type="match status" value="1"/>
</dbReference>
<accession>Q89FU9</accession>
<organism>
    <name type="scientific">Bradyrhizobium diazoefficiens (strain JCM 10833 / BCRC 13528 / IAM 13628 / NBRC 14792 / USDA 110)</name>
    <dbReference type="NCBI Taxonomy" id="224911"/>
    <lineage>
        <taxon>Bacteria</taxon>
        <taxon>Pseudomonadati</taxon>
        <taxon>Pseudomonadota</taxon>
        <taxon>Alphaproteobacteria</taxon>
        <taxon>Hyphomicrobiales</taxon>
        <taxon>Nitrobacteraceae</taxon>
        <taxon>Bradyrhizobium</taxon>
    </lineage>
</organism>
<comment type="function">
    <text evidence="1">Cell wall formation.</text>
</comment>
<comment type="catalytic activity">
    <reaction evidence="1">
        <text>UDP-N-acetyl-alpha-D-muramate + NADP(+) = UDP-N-acetyl-3-O-(1-carboxyvinyl)-alpha-D-glucosamine + NADPH + H(+)</text>
        <dbReference type="Rhea" id="RHEA:12248"/>
        <dbReference type="ChEBI" id="CHEBI:15378"/>
        <dbReference type="ChEBI" id="CHEBI:57783"/>
        <dbReference type="ChEBI" id="CHEBI:58349"/>
        <dbReference type="ChEBI" id="CHEBI:68483"/>
        <dbReference type="ChEBI" id="CHEBI:70757"/>
        <dbReference type="EC" id="1.3.1.98"/>
    </reaction>
</comment>
<comment type="cofactor">
    <cofactor evidence="1">
        <name>FAD</name>
        <dbReference type="ChEBI" id="CHEBI:57692"/>
    </cofactor>
</comment>
<comment type="pathway">
    <text evidence="1">Cell wall biogenesis; peptidoglycan biosynthesis.</text>
</comment>
<comment type="subcellular location">
    <subcellularLocation>
        <location evidence="1">Cytoplasm</location>
    </subcellularLocation>
</comment>
<comment type="similarity">
    <text evidence="1">Belongs to the MurB family.</text>
</comment>
<protein>
    <recommendedName>
        <fullName evidence="1">UDP-N-acetylenolpyruvoylglucosamine reductase</fullName>
        <ecNumber evidence="1">1.3.1.98</ecNumber>
    </recommendedName>
    <alternativeName>
        <fullName evidence="1">UDP-N-acetylmuramate dehydrogenase</fullName>
    </alternativeName>
</protein>
<proteinExistence type="inferred from homology"/>
<keyword id="KW-0131">Cell cycle</keyword>
<keyword id="KW-0132">Cell division</keyword>
<keyword id="KW-0133">Cell shape</keyword>
<keyword id="KW-0961">Cell wall biogenesis/degradation</keyword>
<keyword id="KW-0963">Cytoplasm</keyword>
<keyword id="KW-0274">FAD</keyword>
<keyword id="KW-0285">Flavoprotein</keyword>
<keyword id="KW-0521">NADP</keyword>
<keyword id="KW-0560">Oxidoreductase</keyword>
<keyword id="KW-0573">Peptidoglycan synthesis</keyword>
<keyword id="KW-1185">Reference proteome</keyword>
<name>MURB_BRADU</name>
<sequence length="305" mass="32228">MSFPDITPSLKATMPDLRGRLLANQSLAELTWFRVGGPAQVLFTPADEDDLAYFLAHLASDIPVYVVGVGSNLIVRDGGIAGVVIRLAPRAFGEASASGDIVTAGAAALDKRVAEVAASANIGGLEFYFGIPGTIGGALRMNAGANGGETKDVLIEARGVGRDGTKHVFSNADMKFVYRNSGVDPSIIFTSARFRGEVKDADAIRARMAEVQSHRETAQPIREKTGGSTFKNPPGHSAWKLVDAAGCRGLRVGGAQVSEMHCNFLINTGDATAHDIETLGETVRARVKANSGIELHWEIKRIGVS</sequence>
<gene>
    <name evidence="1" type="primary">murB</name>
    <name type="ordered locus">bll6600</name>
</gene>
<feature type="chain" id="PRO_0000179184" description="UDP-N-acetylenolpyruvoylglucosamine reductase">
    <location>
        <begin position="1"/>
        <end position="305"/>
    </location>
</feature>
<feature type="domain" description="FAD-binding PCMH-type" evidence="1">
    <location>
        <begin position="34"/>
        <end position="199"/>
    </location>
</feature>
<feature type="active site" evidence="1">
    <location>
        <position position="179"/>
    </location>
</feature>
<feature type="active site" description="Proton donor" evidence="1">
    <location>
        <position position="228"/>
    </location>
</feature>
<feature type="active site" evidence="1">
    <location>
        <position position="298"/>
    </location>
</feature>